<keyword id="KW-0002">3D-structure</keyword>
<keyword id="KW-0963">Cytoplasm</keyword>
<keyword id="KW-0687">Ribonucleoprotein</keyword>
<keyword id="KW-0689">Ribosomal protein</keyword>
<proteinExistence type="evidence at protein level"/>
<feature type="chain" id="PRO_0000371613" description="Small ribosomal subunit protein uS2">
    <location>
        <begin position="1"/>
        <end position="287"/>
    </location>
</feature>
<feature type="region of interest" description="Disordered" evidence="2">
    <location>
        <begin position="216"/>
        <end position="243"/>
    </location>
</feature>
<feature type="compositionally biased region" description="Low complexity" evidence="2">
    <location>
        <begin position="227"/>
        <end position="243"/>
    </location>
</feature>
<feature type="helix" evidence="4">
    <location>
        <begin position="14"/>
        <end position="22"/>
    </location>
</feature>
<feature type="turn" evidence="4">
    <location>
        <begin position="33"/>
        <end position="38"/>
    </location>
</feature>
<feature type="strand" evidence="4">
    <location>
        <begin position="39"/>
        <end position="41"/>
    </location>
</feature>
<feature type="helix" evidence="4">
    <location>
        <begin position="52"/>
        <end position="66"/>
    </location>
</feature>
<feature type="helix" evidence="4">
    <location>
        <begin position="72"/>
        <end position="74"/>
    </location>
</feature>
<feature type="strand" evidence="4">
    <location>
        <begin position="75"/>
        <end position="81"/>
    </location>
</feature>
<feature type="helix" evidence="4">
    <location>
        <begin position="83"/>
        <end position="94"/>
    </location>
</feature>
<feature type="strand" evidence="4">
    <location>
        <begin position="98"/>
        <end position="102"/>
    </location>
</feature>
<feature type="strand" evidence="4">
    <location>
        <begin position="108"/>
        <end position="110"/>
    </location>
</feature>
<feature type="strand" evidence="4">
    <location>
        <begin position="112"/>
        <end position="114"/>
    </location>
</feature>
<feature type="strand" evidence="4">
    <location>
        <begin position="121"/>
        <end position="126"/>
    </location>
</feature>
<feature type="turn" evidence="4">
    <location>
        <begin position="128"/>
        <end position="131"/>
    </location>
</feature>
<feature type="helix" evidence="4">
    <location>
        <begin position="132"/>
        <end position="138"/>
    </location>
</feature>
<feature type="turn" evidence="4">
    <location>
        <begin position="139"/>
        <end position="142"/>
    </location>
</feature>
<feature type="strand" evidence="4">
    <location>
        <begin position="145"/>
        <end position="147"/>
    </location>
</feature>
<feature type="strand" evidence="4">
    <location>
        <begin position="151"/>
        <end position="153"/>
    </location>
</feature>
<feature type="helix" evidence="4">
    <location>
        <begin position="169"/>
        <end position="187"/>
    </location>
</feature>
<feature type="strand" evidence="4">
    <location>
        <begin position="193"/>
        <end position="195"/>
    </location>
</feature>
<dbReference type="EMBL" id="AJ496758">
    <property type="protein sequence ID" value="CAD43146.1"/>
    <property type="molecule type" value="mRNA"/>
</dbReference>
<dbReference type="PDB" id="5XXU">
    <property type="method" value="EM"/>
    <property type="resolution" value="3.35 A"/>
    <property type="chains" value="A=1-287"/>
</dbReference>
<dbReference type="PDBsum" id="5XXU"/>
<dbReference type="EMDB" id="EMD-6780"/>
<dbReference type="SMR" id="Q8MPF7"/>
<dbReference type="EnsemblProtists" id="TGME49_266060-t26_1">
    <property type="protein sequence ID" value="TGME49_266060-t26_1"/>
    <property type="gene ID" value="TGME49_266060"/>
</dbReference>
<dbReference type="VEuPathDB" id="ToxoDB:TGARI_266060"/>
<dbReference type="VEuPathDB" id="ToxoDB:TGCAST_266060"/>
<dbReference type="VEuPathDB" id="ToxoDB:TGCOUG_266060"/>
<dbReference type="VEuPathDB" id="ToxoDB:TGDOM2_266060"/>
<dbReference type="VEuPathDB" id="ToxoDB:TGFOU_266060"/>
<dbReference type="VEuPathDB" id="ToxoDB:TGGT1_266060"/>
<dbReference type="VEuPathDB" id="ToxoDB:TGMAS_266060"/>
<dbReference type="VEuPathDB" id="ToxoDB:TGME49_266060"/>
<dbReference type="VEuPathDB" id="ToxoDB:TGP89_266060"/>
<dbReference type="VEuPathDB" id="ToxoDB:TGPRC2_266060"/>
<dbReference type="VEuPathDB" id="ToxoDB:TGRH88_011750"/>
<dbReference type="VEuPathDB" id="ToxoDB:TGRUB_266060"/>
<dbReference type="VEuPathDB" id="ToxoDB:TGVAND_266060"/>
<dbReference type="VEuPathDB" id="ToxoDB:TGVEG_266060"/>
<dbReference type="OMA" id="VKNFFEP"/>
<dbReference type="GO" id="GO:0022627">
    <property type="term" value="C:cytosolic small ribosomal subunit"/>
    <property type="evidence" value="ECO:0007669"/>
    <property type="project" value="UniProtKB-UniRule"/>
</dbReference>
<dbReference type="GO" id="GO:0003735">
    <property type="term" value="F:structural constituent of ribosome"/>
    <property type="evidence" value="ECO:0007669"/>
    <property type="project" value="UniProtKB-UniRule"/>
</dbReference>
<dbReference type="GO" id="GO:0000028">
    <property type="term" value="P:ribosomal small subunit assembly"/>
    <property type="evidence" value="ECO:0007669"/>
    <property type="project" value="UniProtKB-UniRule"/>
</dbReference>
<dbReference type="GO" id="GO:0006412">
    <property type="term" value="P:translation"/>
    <property type="evidence" value="ECO:0007669"/>
    <property type="project" value="UniProtKB-UniRule"/>
</dbReference>
<dbReference type="CDD" id="cd01425">
    <property type="entry name" value="RPS2"/>
    <property type="match status" value="1"/>
</dbReference>
<dbReference type="FunFam" id="3.40.50.10490:FF:000012">
    <property type="entry name" value="40S ribosomal protein SA"/>
    <property type="match status" value="1"/>
</dbReference>
<dbReference type="Gene3D" id="3.40.50.10490">
    <property type="entry name" value="Glucose-6-phosphate isomerase like protein, domain 1"/>
    <property type="match status" value="1"/>
</dbReference>
<dbReference type="HAMAP" id="MF_03015">
    <property type="entry name" value="Ribosomal_S2_euk"/>
    <property type="match status" value="1"/>
</dbReference>
<dbReference type="InterPro" id="IPR001865">
    <property type="entry name" value="Ribosomal_uS2"/>
</dbReference>
<dbReference type="InterPro" id="IPR018130">
    <property type="entry name" value="Ribosomal_uS2_CS"/>
</dbReference>
<dbReference type="InterPro" id="IPR027498">
    <property type="entry name" value="Ribosomal_uS2_euk"/>
</dbReference>
<dbReference type="InterPro" id="IPR005707">
    <property type="entry name" value="Ribosomal_uS2_euk/arc"/>
</dbReference>
<dbReference type="InterPro" id="IPR023591">
    <property type="entry name" value="Ribosomal_uS2_flav_dom_sf"/>
</dbReference>
<dbReference type="NCBIfam" id="TIGR01012">
    <property type="entry name" value="uS2_euk_arch"/>
    <property type="match status" value="1"/>
</dbReference>
<dbReference type="PANTHER" id="PTHR11489">
    <property type="entry name" value="40S RIBOSOMAL PROTEIN SA"/>
    <property type="match status" value="1"/>
</dbReference>
<dbReference type="Pfam" id="PF00318">
    <property type="entry name" value="Ribosomal_S2"/>
    <property type="match status" value="2"/>
</dbReference>
<dbReference type="PRINTS" id="PR00395">
    <property type="entry name" value="RIBOSOMALS2"/>
</dbReference>
<dbReference type="SUPFAM" id="SSF52313">
    <property type="entry name" value="Ribosomal protein S2"/>
    <property type="match status" value="1"/>
</dbReference>
<dbReference type="PROSITE" id="PS00962">
    <property type="entry name" value="RIBOSOMAL_S2_1"/>
    <property type="match status" value="1"/>
</dbReference>
<dbReference type="PROSITE" id="PS00963">
    <property type="entry name" value="RIBOSOMAL_S2_2"/>
    <property type="match status" value="1"/>
</dbReference>
<reference key="1">
    <citation type="submission" date="2002-07" db="EMBL/GenBank/DDBJ databases">
        <title>Identification of Toxoplasma gondii ribosomal protein S2.</title>
        <authorList>
            <person name="Gastens M."/>
            <person name="Fischer H.G."/>
        </authorList>
    </citation>
    <scope>NUCLEOTIDE SEQUENCE [MRNA]</scope>
    <source>
        <strain>BK</strain>
    </source>
</reference>
<protein>
    <recommendedName>
        <fullName evidence="1">Small ribosomal subunit protein uS2</fullName>
    </recommendedName>
    <alternativeName>
        <fullName evidence="3">40S ribosomal protein SA</fullName>
    </alternativeName>
</protein>
<comment type="function">
    <text evidence="1">Required for the assembly and/or stability of the 40S ribosomal subunit. Required for the processing of the 20S rRNA-precursor to mature 18S rRNA in a late step of the maturation of 40S ribosomal subunits.</text>
</comment>
<comment type="subunit">
    <text evidence="1">Component of the small ribosomal subunit. Mature ribosomes consist of a small (40S) and a large (60S) subunit. The 40S subunit contains about 33 different proteins and 1 molecule of RNA (18S). The 60S subunit contains about 49 different proteins and 3 molecules of RNA (25S, 5.8S and 5S). Interacts with ribosomal protein S21.</text>
</comment>
<comment type="subcellular location">
    <subcellularLocation>
        <location evidence="1">Cytoplasm</location>
    </subcellularLocation>
</comment>
<comment type="similarity">
    <text evidence="1">Belongs to the universal ribosomal protein uS2 family.</text>
</comment>
<accession>Q8MPF7</accession>
<sequence>MAADKQAKLSLQEDSIAKMLICKAHIGTKNVEHKMRPYVFKSTSEGIHLINLAKTWEKILMAARVIVAIENPADVLVISARPYGSRAVLKFSQYVGAQAIAGRWTPGMLTNQITQKFMEPRLLIVTDPRTDAQAVRESAYANVPVIALCDTDSPLEHVDICIPCNNKGKESIALMYWLLAREVLYLRGELPSRSVPWDVMVDMFLWRDPEEFERKERLEDEEAAPHTAQADATQWGADAAAADWKQAGADWTGPAAGGAGGEWDQSAVAAEGEWGGGRPGVAVGEPW</sequence>
<evidence type="ECO:0000255" key="1">
    <source>
        <dbReference type="HAMAP-Rule" id="MF_03015"/>
    </source>
</evidence>
<evidence type="ECO:0000256" key="2">
    <source>
        <dbReference type="SAM" id="MobiDB-lite"/>
    </source>
</evidence>
<evidence type="ECO:0000305" key="3"/>
<evidence type="ECO:0007829" key="4">
    <source>
        <dbReference type="PDB" id="5XXU"/>
    </source>
</evidence>
<name>RSSA_TOXGO</name>
<organism>
    <name type="scientific">Toxoplasma gondii</name>
    <dbReference type="NCBI Taxonomy" id="5811"/>
    <lineage>
        <taxon>Eukaryota</taxon>
        <taxon>Sar</taxon>
        <taxon>Alveolata</taxon>
        <taxon>Apicomplexa</taxon>
        <taxon>Conoidasida</taxon>
        <taxon>Coccidia</taxon>
        <taxon>Eucoccidiorida</taxon>
        <taxon>Eimeriorina</taxon>
        <taxon>Sarcocystidae</taxon>
        <taxon>Toxoplasma</taxon>
    </lineage>
</organism>